<accession>Q18DQ4</accession>
<keyword id="KW-0238">DNA-binding</keyword>
<keyword id="KW-1185">Reference proteome</keyword>
<reference key="1">
    <citation type="journal article" date="2006" name="BMC Genomics">
        <title>The genome of the square archaeon Haloquadratum walsbyi: life at the limits of water activity.</title>
        <authorList>
            <person name="Bolhuis H."/>
            <person name="Palm P."/>
            <person name="Wende A."/>
            <person name="Falb M."/>
            <person name="Rampp M."/>
            <person name="Rodriguez-Valera F."/>
            <person name="Pfeiffer F."/>
            <person name="Oesterhelt D."/>
        </authorList>
    </citation>
    <scope>NUCLEOTIDE SEQUENCE [LARGE SCALE GENOMIC DNA]</scope>
    <source>
        <strain>DSM 16790 / HBSQ001</strain>
    </source>
</reference>
<sequence>MSETPDDLDELRQQRMEELRDQADGQQSQTSDNTAAAQEAAREKAEAQQEALLKQHLTDGARQRLNAIEMSKPDFAEKVKKQLVTLAQSGRIQDRIDEDQMRELLQELKPDSKSYNIRRR</sequence>
<dbReference type="EMBL" id="AM180088">
    <property type="protein sequence ID" value="CAJ51235.1"/>
    <property type="molecule type" value="Genomic_DNA"/>
</dbReference>
<dbReference type="RefSeq" id="WP_011570401.1">
    <property type="nucleotide sequence ID" value="NC_008212.1"/>
</dbReference>
<dbReference type="SMR" id="Q18DQ4"/>
<dbReference type="STRING" id="362976.HQ_1105A"/>
<dbReference type="GeneID" id="4192080"/>
<dbReference type="KEGG" id="hwa:HQ_1105A"/>
<dbReference type="eggNOG" id="arCOG04179">
    <property type="taxonomic scope" value="Archaea"/>
</dbReference>
<dbReference type="HOGENOM" id="CLU_122978_3_0_2"/>
<dbReference type="Proteomes" id="UP000001975">
    <property type="component" value="Chromosome"/>
</dbReference>
<dbReference type="GO" id="GO:0005829">
    <property type="term" value="C:cytosol"/>
    <property type="evidence" value="ECO:0007669"/>
    <property type="project" value="TreeGrafter"/>
</dbReference>
<dbReference type="GO" id="GO:0003677">
    <property type="term" value="F:DNA binding"/>
    <property type="evidence" value="ECO:0007669"/>
    <property type="project" value="UniProtKB-UniRule"/>
</dbReference>
<dbReference type="Gene3D" id="1.10.8.140">
    <property type="entry name" value="PDCD5-like"/>
    <property type="match status" value="1"/>
</dbReference>
<dbReference type="HAMAP" id="MF_00026">
    <property type="entry name" value="dsDNA_bind"/>
    <property type="match status" value="1"/>
</dbReference>
<dbReference type="InterPro" id="IPR022889">
    <property type="entry name" value="DNA_bind_arc"/>
</dbReference>
<dbReference type="InterPro" id="IPR002836">
    <property type="entry name" value="PDCD5-like"/>
</dbReference>
<dbReference type="InterPro" id="IPR036883">
    <property type="entry name" value="PDCD5-like_sf"/>
</dbReference>
<dbReference type="NCBIfam" id="NF003268">
    <property type="entry name" value="PRK04239.1"/>
    <property type="match status" value="1"/>
</dbReference>
<dbReference type="PANTHER" id="PTHR10840">
    <property type="entry name" value="PROGRAMMED CELL DEATH PROTEIN 5"/>
    <property type="match status" value="1"/>
</dbReference>
<dbReference type="PANTHER" id="PTHR10840:SF0">
    <property type="entry name" value="PROGRAMMED CELL DEATH PROTEIN 5"/>
    <property type="match status" value="1"/>
</dbReference>
<dbReference type="Pfam" id="PF01984">
    <property type="entry name" value="dsDNA_bind"/>
    <property type="match status" value="1"/>
</dbReference>
<dbReference type="PIRSF" id="PIRSF015730">
    <property type="entry name" value="TFAR19"/>
    <property type="match status" value="1"/>
</dbReference>
<dbReference type="SUPFAM" id="SSF46950">
    <property type="entry name" value="Double-stranded DNA-binding domain"/>
    <property type="match status" value="1"/>
</dbReference>
<evidence type="ECO:0000255" key="1">
    <source>
        <dbReference type="HAMAP-Rule" id="MF_00026"/>
    </source>
</evidence>
<evidence type="ECO:0000256" key="2">
    <source>
        <dbReference type="SAM" id="MobiDB-lite"/>
    </source>
</evidence>
<comment type="similarity">
    <text evidence="1">Belongs to the PDCD5 family.</text>
</comment>
<protein>
    <recommendedName>
        <fullName evidence="1">DNA-binding protein HQ_1105A</fullName>
    </recommendedName>
</protein>
<name>Y1105_HALWD</name>
<proteinExistence type="inferred from homology"/>
<feature type="chain" id="PRO_0000284560" description="DNA-binding protein HQ_1105A">
    <location>
        <begin position="1"/>
        <end position="120"/>
    </location>
</feature>
<feature type="region of interest" description="Disordered" evidence="2">
    <location>
        <begin position="1"/>
        <end position="55"/>
    </location>
</feature>
<feature type="compositionally biased region" description="Basic and acidic residues" evidence="2">
    <location>
        <begin position="10"/>
        <end position="23"/>
    </location>
</feature>
<feature type="compositionally biased region" description="Polar residues" evidence="2">
    <location>
        <begin position="24"/>
        <end position="34"/>
    </location>
</feature>
<organism>
    <name type="scientific">Haloquadratum walsbyi (strain DSM 16790 / HBSQ001)</name>
    <dbReference type="NCBI Taxonomy" id="362976"/>
    <lineage>
        <taxon>Archaea</taxon>
        <taxon>Methanobacteriati</taxon>
        <taxon>Methanobacteriota</taxon>
        <taxon>Stenosarchaea group</taxon>
        <taxon>Halobacteria</taxon>
        <taxon>Halobacteriales</taxon>
        <taxon>Haloferacaceae</taxon>
        <taxon>Haloquadratum</taxon>
    </lineage>
</organism>
<gene>
    <name type="ordered locus">HQ_1105A</name>
</gene>